<protein>
    <recommendedName>
        <fullName evidence="8">Sterol regulatory element-binding protein 1</fullName>
        <shortName evidence="8">SREBP-1</shortName>
    </recommendedName>
    <alternativeName>
        <fullName evidence="8">Sterol regulatory element-binding transcription factor 1</fullName>
    </alternativeName>
    <component>
        <recommendedName>
            <fullName evidence="9">Processed sterol regulatory element-binding protein 1</fullName>
        </recommendedName>
        <alternativeName>
            <fullName evidence="9">Transcription factor SREBF1</fullName>
        </alternativeName>
    </component>
</protein>
<feature type="chain" id="PRO_0000127446" description="Sterol regulatory element-binding protein 1">
    <location>
        <begin position="1"/>
        <end position="1133"/>
    </location>
</feature>
<feature type="chain" id="PRO_0000314028" description="Processed sterol regulatory element-binding protein 1" evidence="3">
    <location>
        <begin position="1"/>
        <end position="479"/>
    </location>
</feature>
<feature type="topological domain" description="Cytoplasmic" evidence="5">
    <location>
        <begin position="1"/>
        <end position="476"/>
    </location>
</feature>
<feature type="transmembrane region" description="Helical" evidence="5">
    <location>
        <begin position="477"/>
        <end position="497"/>
    </location>
</feature>
<feature type="topological domain" description="Lumenal" evidence="5">
    <location>
        <begin position="498"/>
        <end position="535"/>
    </location>
</feature>
<feature type="transmembrane region" description="Helical" evidence="5">
    <location>
        <begin position="536"/>
        <end position="556"/>
    </location>
</feature>
<feature type="topological domain" description="Cytoplasmic" evidence="5">
    <location>
        <begin position="557"/>
        <end position="1133"/>
    </location>
</feature>
<feature type="domain" description="bHLH" evidence="6">
    <location>
        <begin position="317"/>
        <end position="367"/>
    </location>
</feature>
<feature type="region of interest" description="Transcriptional activation (acidic)" evidence="1">
    <location>
        <begin position="1"/>
        <end position="60"/>
    </location>
</feature>
<feature type="region of interest" description="Disordered" evidence="7">
    <location>
        <begin position="46"/>
        <end position="78"/>
    </location>
</feature>
<feature type="region of interest" description="Disordered" evidence="7">
    <location>
        <begin position="131"/>
        <end position="219"/>
    </location>
</feature>
<feature type="region of interest" description="Interaction with LMNA" evidence="4">
    <location>
        <begin position="227"/>
        <end position="486"/>
    </location>
</feature>
<feature type="region of interest" description="Leucine-zipper">
    <location>
        <begin position="367"/>
        <end position="388"/>
    </location>
</feature>
<feature type="region of interest" description="Disordered" evidence="7">
    <location>
        <begin position="415"/>
        <end position="456"/>
    </location>
</feature>
<feature type="short sequence motif" description="9aaTAD" evidence="1">
    <location>
        <begin position="27"/>
        <end position="35"/>
    </location>
</feature>
<feature type="compositionally biased region" description="Low complexity" evidence="7">
    <location>
        <begin position="68"/>
        <end position="78"/>
    </location>
</feature>
<feature type="compositionally biased region" description="Polar residues" evidence="7">
    <location>
        <begin position="165"/>
        <end position="180"/>
    </location>
</feature>
<feature type="compositionally biased region" description="Low complexity" evidence="7">
    <location>
        <begin position="181"/>
        <end position="191"/>
    </location>
</feature>
<feature type="compositionally biased region" description="Low complexity" evidence="7">
    <location>
        <begin position="203"/>
        <end position="217"/>
    </location>
</feature>
<feature type="compositionally biased region" description="Low complexity" evidence="7">
    <location>
        <begin position="425"/>
        <end position="454"/>
    </location>
</feature>
<feature type="site" description="Cleavage; by caspase-3 and caspase-7" evidence="3">
    <location>
        <begin position="452"/>
        <end position="453"/>
    </location>
</feature>
<feature type="site" description="Cleavage; by MBTPS2" evidence="3">
    <location>
        <begin position="479"/>
        <end position="480"/>
    </location>
</feature>
<feature type="site" description="Cleavage; by MBTPS1" evidence="1">
    <location>
        <begin position="518"/>
        <end position="519"/>
    </location>
</feature>
<feature type="modified residue" description="Phosphoserine" evidence="2">
    <location>
        <position position="97"/>
    </location>
</feature>
<feature type="modified residue" description="Phosphoserine" evidence="1">
    <location>
        <position position="116"/>
    </location>
</feature>
<feature type="modified residue" description="Phosphoserine; by SIK1" evidence="4">
    <location>
        <position position="331"/>
    </location>
</feature>
<feature type="modified residue" description="Phosphoserine; by SIK1" evidence="4">
    <location>
        <position position="332"/>
    </location>
</feature>
<feature type="modified residue" description="Phosphoserine; by AMPK" evidence="4">
    <location>
        <position position="390"/>
    </location>
</feature>
<feature type="modified residue" description="Phosphoserine; by SIK1" evidence="4">
    <location>
        <position position="396"/>
    </location>
</feature>
<feature type="modified residue" description="Phosphoserine" evidence="4">
    <location>
        <position position="449"/>
    </location>
</feature>
<feature type="modified residue" description="Phosphoserine" evidence="1">
    <location>
        <position position="1046"/>
    </location>
</feature>
<reference key="1">
    <citation type="journal article" date="1994" name="J. Biol. Chem.">
        <title>Assignment of the membrane attachment, DNA binding, and transcriptional activation domains of sterol regulatory element-binding protein-1 (SREBP-1).</title>
        <authorList>
            <person name="Sato R."/>
            <person name="Yang J."/>
            <person name="Wang X."/>
            <person name="Evans M.J."/>
            <person name="Ho Y.K."/>
            <person name="Goldstein J.L."/>
            <person name="Brown M.S."/>
        </authorList>
    </citation>
    <scope>NUCLEOTIDE SEQUENCE [MRNA]</scope>
</reference>
<name>SRBP1_CRIGR</name>
<evidence type="ECO:0000250" key="1">
    <source>
        <dbReference type="UniProtKB" id="P36956"/>
    </source>
</evidence>
<evidence type="ECO:0000250" key="2">
    <source>
        <dbReference type="UniProtKB" id="P56720"/>
    </source>
</evidence>
<evidence type="ECO:0000250" key="3">
    <source>
        <dbReference type="UniProtKB" id="Q12772"/>
    </source>
</evidence>
<evidence type="ECO:0000250" key="4">
    <source>
        <dbReference type="UniProtKB" id="Q9WTN3"/>
    </source>
</evidence>
<evidence type="ECO:0000255" key="5"/>
<evidence type="ECO:0000255" key="6">
    <source>
        <dbReference type="PROSITE-ProRule" id="PRU00981"/>
    </source>
</evidence>
<evidence type="ECO:0000256" key="7">
    <source>
        <dbReference type="SAM" id="MobiDB-lite"/>
    </source>
</evidence>
<evidence type="ECO:0000303" key="8">
    <source>
    </source>
</evidence>
<evidence type="ECO:0000305" key="9"/>
<accession>Q60416</accession>
<sequence length="1133" mass="120466">MDELPFGEAAVEQALDELGELDAALLTDIQDMLQLINNQDSDFPGLFDSPYAGGGAGDTEPTSPGANSPESLSSPASLGSSLEAFLGEPKATPASLSPVPSASTALKMYPSVPPFSPGPGIKEEPVPLTILQPPAAQPSPGTLLPPSFPPPPLQLSPAPVLGYSSLPSGFSGTLPGNTQQPPSSLSLASAPGVSPISLHTQVQSSASQQPLPASTAPRTTTVTSQIQRVPVVLQPHFIKADSLLLTTVKTDTGATMKTAGISTLAPGTAVQAGPLQTLVSGGTILATVPLVVDTDKLPIHRLAAGSKALGSAQSRGEKRTAHNAIEKRYRSSINDKIVELKDLVVGTEAKLNKSAVLRKAIDYIRFLQHSNQKLKQENLALRNAAHKSKSLKDLVSACGSAGGTDVAMEGVKPEVVDTLTPPPSDAGSPSQSSPLSLGSRGSSSGGSDSEPDSPVFEDSQVKAQRLHSHGMLDRSRLALCALVFLCLTCNPLASLFGWGIPGPSSASGAHHSSGRSMLEAESRDGSNWTQWLLPPLVWLANGLLVLACLALLFVYGEPVTRPHTSPAVHFWRHRKQADLDLARGDFAQAAQQLWLALQALGRPLPTSNLDLACSLLWNLIRHLLQRLWVGRWLAGRAGGLRRDCGLRMDARASARDAALVYHKLHQLHAMGKYTGGHLIASNLALSALNLAECAGDAVSMATLAEIYVAAALRVKTSLPRALHFLTRFFLSSARQACLAQSGSVPLAMQWLCHPVGHRFFVDGDWAVHGAPQESLYSVAGNPVDPLAQVTRLFCEHLLERALNCIAQPSPGTADGDREFSDALGYLQLLNRCSDAVGTPACSFSVSSSMASTTGTDPVAKWWASLTAVVIHWLRRDEEAAERLYPLVERMPHVLQETERPLPKAALYSFKAARALLDHRKVESGPASLAICEKASGYLRDSLAAPPTGSSIDKAMQLLLCDLLLVARTSMWQRQQSPASAQVAHSASNGSQASALELRGFQQDLSSLRRLAQNFRPAMRRVFLHEATARLMAGASPARTHQLLDRSLRRRAGSSGKGGTVAELEPRPTWREHTEALLLASCYLPPAFLSAPGQQMSMLAEAARTVEKLGDHRLLLDCQQMLLRLGGGTTVTSS</sequence>
<proteinExistence type="evidence at transcript level"/>
<organism>
    <name type="scientific">Cricetulus griseus</name>
    <name type="common">Chinese hamster</name>
    <name type="synonym">Cricetulus barabensis griseus</name>
    <dbReference type="NCBI Taxonomy" id="10029"/>
    <lineage>
        <taxon>Eukaryota</taxon>
        <taxon>Metazoa</taxon>
        <taxon>Chordata</taxon>
        <taxon>Craniata</taxon>
        <taxon>Vertebrata</taxon>
        <taxon>Euteleostomi</taxon>
        <taxon>Mammalia</taxon>
        <taxon>Eutheria</taxon>
        <taxon>Euarchontoglires</taxon>
        <taxon>Glires</taxon>
        <taxon>Rodentia</taxon>
        <taxon>Myomorpha</taxon>
        <taxon>Muroidea</taxon>
        <taxon>Cricetidae</taxon>
        <taxon>Cricetinae</taxon>
        <taxon>Cricetulus</taxon>
    </lineage>
</organism>
<gene>
    <name evidence="1" type="primary">SREBF1</name>
    <name evidence="8" type="synonym">SREBP1</name>
</gene>
<keyword id="KW-0010">Activator</keyword>
<keyword id="KW-0153">Cholesterol metabolism</keyword>
<keyword id="KW-0968">Cytoplasmic vesicle</keyword>
<keyword id="KW-0238">DNA-binding</keyword>
<keyword id="KW-0256">Endoplasmic reticulum</keyword>
<keyword id="KW-0333">Golgi apparatus</keyword>
<keyword id="KW-0443">Lipid metabolism</keyword>
<keyword id="KW-0472">Membrane</keyword>
<keyword id="KW-0539">Nucleus</keyword>
<keyword id="KW-0597">Phosphoprotein</keyword>
<keyword id="KW-0753">Steroid metabolism</keyword>
<keyword id="KW-1207">Sterol metabolism</keyword>
<keyword id="KW-0804">Transcription</keyword>
<keyword id="KW-0805">Transcription regulation</keyword>
<keyword id="KW-0812">Transmembrane</keyword>
<keyword id="KW-1133">Transmembrane helix</keyword>
<keyword id="KW-0832">Ubl conjugation</keyword>
<comment type="function">
    <molecule>Sterol regulatory element-binding protein 1</molecule>
    <text evidence="1 4">Precursor of the transcription factor form (Processed sterol regulatory element-binding protein 1), which is embedded in the endoplasmic reticulum membrane (By similarity). Low sterol concentrations promote processing of this form, releasing the transcription factor form that translocates into the nucleus and activates transcription of genes involved in cholesterol biosynthesis and lipid homeostasis (By similarity).</text>
</comment>
<comment type="function">
    <molecule>Processed sterol regulatory element-binding protein 1</molecule>
    <text evidence="1">Key transcription factor that regulates expression of genes involved in cholesterol biosynthesis and lipid homeostasis. Binds to the sterol regulatory element 1 (SRE-1) (5'-ATCACCCCAC-3'). Has dual sequence specificity binding to both an E-box motif (5'-ATCACGTGA-3') and to SRE-1 (5'-ATCACCCCAC-3'). Regulates the promoters of genes involved in cholesterol biosynthesis and the LDL receptor (LDLR) pathway of sterol regulation.</text>
</comment>
<comment type="activity regulation">
    <text evidence="4">Activation by cleavage is down-regulated upon activation of SIRT3-dependent PRKAA1/AMPK-alpha signaling cascade which leads to inhibition of ATP-consuming lipogenesis to restore cellular energy balance.</text>
</comment>
<comment type="subunit">
    <molecule>Processed sterol regulatory element-binding protein 1</molecule>
    <text evidence="1 4">Efficient DNA binding of the soluble transcription factor fragment requires dimerization with another bHLH protein (By similarity). Interacts with CEBPA, the interaction produces a transcriptional synergy. Interacts with LMNA (By similarity).</text>
</comment>
<comment type="subunit">
    <molecule>Sterol regulatory element-binding protein 1</molecule>
    <text evidence="1">Forms a tight complex with SCAP, the SCAP-SREBP complex, in the endoplasmic reticulum membrane and the Golgi apparatus. Interacts with PAQR3; the interaction anchors the SCAP-SREBP complex to the Golgi apparatus in low cholesterol conditions.</text>
</comment>
<comment type="subcellular location">
    <molecule>Sterol regulatory element-binding protein 1</molecule>
    <subcellularLocation>
        <location evidence="1">Endoplasmic reticulum membrane</location>
        <topology evidence="5">Multi-pass membrane protein</topology>
    </subcellularLocation>
    <subcellularLocation>
        <location evidence="4">Golgi apparatus membrane</location>
        <topology evidence="5">Multi-pass membrane protein</topology>
    </subcellularLocation>
    <subcellularLocation>
        <location evidence="4">Cytoplasmic vesicle</location>
        <location evidence="4">COPII-coated vesicle membrane</location>
        <topology evidence="5">Multi-pass membrane protein</topology>
    </subcellularLocation>
    <text evidence="4">At high sterol concentrations, the SCAP-SREBP is retained in the endoplasmic reticulum. Low sterol concentrations promote recruitment into COPII-coated vesicles and transport of the SCAP-SREBP to the Golgi, where it is processed.</text>
</comment>
<comment type="subcellular location">
    <molecule>Processed sterol regulatory element-binding protein 1</molecule>
    <subcellularLocation>
        <location evidence="1">Nucleus</location>
    </subcellularLocation>
</comment>
<comment type="domain">
    <text evidence="1">The 9aaTAD motif is a transactivation domain present in a large number of yeast and animal transcription factors.</text>
</comment>
<comment type="PTM">
    <molecule>Sterol regulatory element-binding protein 1</molecule>
    <text evidence="1">Processed in the Golgi apparatus, releasing the protein from the membrane. At low cholesterol the SCAP-SREBP complex is recruited into COPII vesicles for export from the endoplasmic reticulum. In the Golgi, complex SREBPs are cleaved sequentially by site-1 (MBTPS1, S1P) and site-2 (MBTPS2, S2P) proteases. The first cleavage by site-1 protease occurs within the luminal loop, the second cleavage by site-2 protease occurs within the first transmembrane domain, releasing the transcription factor from the Golgi membrane.</text>
</comment>
<comment type="PTM">
    <text evidence="4">Phosphorylated by AMPK, leading to suppress protein processing and nuclear translocation, and repress target gene expression. Phosphorylation at Ser-396 by SIK1 represses activity possibly by inhibiting DNA-binding.</text>
</comment>
<comment type="PTM">
    <molecule>Sterol regulatory element-binding protein 1</molecule>
    <text evidence="1">SCAP-free SREBF1 is ubiquitinated by the BCR(ARMC5) complex, leading to its degradation.</text>
</comment>
<comment type="PTM">
    <molecule>Processed sterol regulatory element-binding protein 1</molecule>
    <text evidence="1">Ubiquitinated; the nuclear form has a rapid turnover and is rapidly ubiquitinated and degraded by the proteasome in the nucleus.</text>
</comment>
<comment type="similarity">
    <text evidence="9">Belongs to the SREBP family.</text>
</comment>
<dbReference type="EMBL" id="U09103">
    <property type="protein sequence ID" value="AAA20085.1"/>
    <property type="molecule type" value="mRNA"/>
</dbReference>
<dbReference type="PIR" id="A54164">
    <property type="entry name" value="A54164"/>
</dbReference>
<dbReference type="RefSeq" id="NP_001230932.1">
    <property type="nucleotide sequence ID" value="NM_001244003.1"/>
</dbReference>
<dbReference type="SMR" id="Q60416"/>
<dbReference type="CORUM" id="Q60416"/>
<dbReference type="PaxDb" id="10029-NP_001230932.1"/>
<dbReference type="Ensembl" id="ENSCGRT00001013004.1">
    <property type="protein sequence ID" value="ENSCGRP00001008853.1"/>
    <property type="gene ID" value="ENSCGRG00001011040.1"/>
</dbReference>
<dbReference type="GeneID" id="100689018"/>
<dbReference type="KEGG" id="cge:100689018"/>
<dbReference type="CTD" id="6720"/>
<dbReference type="eggNOG" id="KOG2588">
    <property type="taxonomic scope" value="Eukaryota"/>
</dbReference>
<dbReference type="GeneTree" id="ENSGT00940000159156"/>
<dbReference type="OrthoDB" id="2133190at2759"/>
<dbReference type="Proteomes" id="UP000694386">
    <property type="component" value="Unplaced"/>
</dbReference>
<dbReference type="Proteomes" id="UP001108280">
    <property type="component" value="Chromosome 7"/>
</dbReference>
<dbReference type="GO" id="GO:0005737">
    <property type="term" value="C:cytoplasm"/>
    <property type="evidence" value="ECO:0000250"/>
    <property type="project" value="UniProtKB"/>
</dbReference>
<dbReference type="GO" id="GO:0005789">
    <property type="term" value="C:endoplasmic reticulum membrane"/>
    <property type="evidence" value="ECO:0007669"/>
    <property type="project" value="UniProtKB-SubCell"/>
</dbReference>
<dbReference type="GO" id="GO:0012507">
    <property type="term" value="C:ER to Golgi transport vesicle membrane"/>
    <property type="evidence" value="ECO:0007669"/>
    <property type="project" value="UniProtKB-SubCell"/>
</dbReference>
<dbReference type="GO" id="GO:0000139">
    <property type="term" value="C:Golgi membrane"/>
    <property type="evidence" value="ECO:0007669"/>
    <property type="project" value="UniProtKB-SubCell"/>
</dbReference>
<dbReference type="GO" id="GO:0005654">
    <property type="term" value="C:nucleoplasm"/>
    <property type="evidence" value="ECO:0007669"/>
    <property type="project" value="Ensembl"/>
</dbReference>
<dbReference type="GO" id="GO:0003682">
    <property type="term" value="F:chromatin binding"/>
    <property type="evidence" value="ECO:0007669"/>
    <property type="project" value="Ensembl"/>
</dbReference>
<dbReference type="GO" id="GO:0003677">
    <property type="term" value="F:DNA binding"/>
    <property type="evidence" value="ECO:0000250"/>
    <property type="project" value="UniProtKB"/>
</dbReference>
<dbReference type="GO" id="GO:0001228">
    <property type="term" value="F:DNA-binding transcription activator activity, RNA polymerase II-specific"/>
    <property type="evidence" value="ECO:0007669"/>
    <property type="project" value="Ensembl"/>
</dbReference>
<dbReference type="GO" id="GO:0004879">
    <property type="term" value="F:nuclear receptor activity"/>
    <property type="evidence" value="ECO:0007669"/>
    <property type="project" value="Ensembl"/>
</dbReference>
<dbReference type="GO" id="GO:0046983">
    <property type="term" value="F:protein dimerization activity"/>
    <property type="evidence" value="ECO:0007669"/>
    <property type="project" value="InterPro"/>
</dbReference>
<dbReference type="GO" id="GO:0019901">
    <property type="term" value="F:protein kinase binding"/>
    <property type="evidence" value="ECO:0007669"/>
    <property type="project" value="Ensembl"/>
</dbReference>
<dbReference type="GO" id="GO:0032810">
    <property type="term" value="F:sterol response element binding"/>
    <property type="evidence" value="ECO:0007669"/>
    <property type="project" value="Ensembl"/>
</dbReference>
<dbReference type="GO" id="GO:0001221">
    <property type="term" value="F:transcription coregulator binding"/>
    <property type="evidence" value="ECO:0007669"/>
    <property type="project" value="Ensembl"/>
</dbReference>
<dbReference type="GO" id="GO:0009267">
    <property type="term" value="P:cellular response to starvation"/>
    <property type="evidence" value="ECO:0007669"/>
    <property type="project" value="Ensembl"/>
</dbReference>
<dbReference type="GO" id="GO:0006695">
    <property type="term" value="P:cholesterol biosynthetic process"/>
    <property type="evidence" value="ECO:0007669"/>
    <property type="project" value="Ensembl"/>
</dbReference>
<dbReference type="GO" id="GO:0007623">
    <property type="term" value="P:circadian rhythm"/>
    <property type="evidence" value="ECO:0007669"/>
    <property type="project" value="Ensembl"/>
</dbReference>
<dbReference type="GO" id="GO:0045444">
    <property type="term" value="P:fat cell differentiation"/>
    <property type="evidence" value="ECO:0007669"/>
    <property type="project" value="Ensembl"/>
</dbReference>
<dbReference type="GO" id="GO:0008286">
    <property type="term" value="P:insulin receptor signaling pathway"/>
    <property type="evidence" value="ECO:0007669"/>
    <property type="project" value="Ensembl"/>
</dbReference>
<dbReference type="GO" id="GO:0030073">
    <property type="term" value="P:insulin secretion"/>
    <property type="evidence" value="ECO:0007669"/>
    <property type="project" value="Ensembl"/>
</dbReference>
<dbReference type="GO" id="GO:0008610">
    <property type="term" value="P:lipid biosynthetic process"/>
    <property type="evidence" value="ECO:0000250"/>
    <property type="project" value="UniProtKB"/>
</dbReference>
<dbReference type="GO" id="GO:0042789">
    <property type="term" value="P:mRNA transcription by RNA polymerase II"/>
    <property type="evidence" value="ECO:0007669"/>
    <property type="project" value="Ensembl"/>
</dbReference>
<dbReference type="GO" id="GO:0046676">
    <property type="term" value="P:negative regulation of insulin secretion"/>
    <property type="evidence" value="ECO:0007669"/>
    <property type="project" value="Ensembl"/>
</dbReference>
<dbReference type="GO" id="GO:0000122">
    <property type="term" value="P:negative regulation of transcription by RNA polymerase II"/>
    <property type="evidence" value="ECO:0007669"/>
    <property type="project" value="Ensembl"/>
</dbReference>
<dbReference type="GO" id="GO:0090209">
    <property type="term" value="P:negative regulation of triglyceride metabolic process"/>
    <property type="evidence" value="ECO:0007669"/>
    <property type="project" value="Ensembl"/>
</dbReference>
<dbReference type="GO" id="GO:0045542">
    <property type="term" value="P:positive regulation of cholesterol biosynthetic process"/>
    <property type="evidence" value="ECO:0007669"/>
    <property type="project" value="Ensembl"/>
</dbReference>
<dbReference type="GO" id="GO:1902895">
    <property type="term" value="P:positive regulation of miRNA transcription"/>
    <property type="evidence" value="ECO:0007669"/>
    <property type="project" value="Ensembl"/>
</dbReference>
<dbReference type="GO" id="GO:0010867">
    <property type="term" value="P:positive regulation of triglyceride biosynthetic process"/>
    <property type="evidence" value="ECO:0000250"/>
    <property type="project" value="UniProtKB"/>
</dbReference>
<dbReference type="GO" id="GO:0019217">
    <property type="term" value="P:regulation of fatty acid metabolic process"/>
    <property type="evidence" value="ECO:0007669"/>
    <property type="project" value="Ensembl"/>
</dbReference>
<dbReference type="GO" id="GO:0003062">
    <property type="term" value="P:regulation of heart rate by chemical signal"/>
    <property type="evidence" value="ECO:0007669"/>
    <property type="project" value="Ensembl"/>
</dbReference>
<dbReference type="GO" id="GO:1901524">
    <property type="term" value="P:regulation of mitophagy"/>
    <property type="evidence" value="ECO:0007669"/>
    <property type="project" value="Ensembl"/>
</dbReference>
<dbReference type="GO" id="GO:0031647">
    <property type="term" value="P:regulation of protein stability"/>
    <property type="evidence" value="ECO:0007669"/>
    <property type="project" value="Ensembl"/>
</dbReference>
<dbReference type="GO" id="GO:1903214">
    <property type="term" value="P:regulation of protein targeting to mitochondrion"/>
    <property type="evidence" value="ECO:0007669"/>
    <property type="project" value="Ensembl"/>
</dbReference>
<dbReference type="GO" id="GO:0009749">
    <property type="term" value="P:response to glucose"/>
    <property type="evidence" value="ECO:0007669"/>
    <property type="project" value="Ensembl"/>
</dbReference>
<dbReference type="GO" id="GO:0032933">
    <property type="term" value="P:SREBP signaling pathway"/>
    <property type="evidence" value="ECO:0007669"/>
    <property type="project" value="Ensembl"/>
</dbReference>
<dbReference type="CDD" id="cd18921">
    <property type="entry name" value="bHLHzip_SREBP1"/>
    <property type="match status" value="1"/>
</dbReference>
<dbReference type="FunFam" id="4.10.280.10:FF:000016">
    <property type="entry name" value="Sterol regulatory element-binding transcription factor 1"/>
    <property type="match status" value="1"/>
</dbReference>
<dbReference type="Gene3D" id="4.10.280.10">
    <property type="entry name" value="Helix-loop-helix DNA-binding domain"/>
    <property type="match status" value="1"/>
</dbReference>
<dbReference type="InterPro" id="IPR011598">
    <property type="entry name" value="bHLH_dom"/>
</dbReference>
<dbReference type="InterPro" id="IPR036638">
    <property type="entry name" value="HLH_DNA-bd_sf"/>
</dbReference>
<dbReference type="PANTHER" id="PTHR46062">
    <property type="entry name" value="STEROL REGULATORY ELEMENT-BINDING PROTEIN"/>
    <property type="match status" value="1"/>
</dbReference>
<dbReference type="PANTHER" id="PTHR46062:SF2">
    <property type="entry name" value="STEROL REGULATORY ELEMENT-BINDING PROTEIN 1"/>
    <property type="match status" value="1"/>
</dbReference>
<dbReference type="Pfam" id="PF00010">
    <property type="entry name" value="HLH"/>
    <property type="match status" value="1"/>
</dbReference>
<dbReference type="SMART" id="SM00353">
    <property type="entry name" value="HLH"/>
    <property type="match status" value="1"/>
</dbReference>
<dbReference type="SUPFAM" id="SSF47459">
    <property type="entry name" value="HLH, helix-loop-helix DNA-binding domain"/>
    <property type="match status" value="1"/>
</dbReference>
<dbReference type="PROSITE" id="PS50888">
    <property type="entry name" value="BHLH"/>
    <property type="match status" value="1"/>
</dbReference>